<feature type="chain" id="PRO_0000151867" description="ATP phosphoribosyltransferase">
    <location>
        <begin position="1"/>
        <end position="285"/>
    </location>
</feature>
<organism>
    <name type="scientific">Streptomyces avermitilis (strain ATCC 31267 / DSM 46492 / JCM 5070 / NBRC 14893 / NCIMB 12804 / NRRL 8165 / MA-4680)</name>
    <dbReference type="NCBI Taxonomy" id="227882"/>
    <lineage>
        <taxon>Bacteria</taxon>
        <taxon>Bacillati</taxon>
        <taxon>Actinomycetota</taxon>
        <taxon>Actinomycetes</taxon>
        <taxon>Kitasatosporales</taxon>
        <taxon>Streptomycetaceae</taxon>
        <taxon>Streptomyces</taxon>
    </lineage>
</organism>
<keyword id="KW-0028">Amino-acid biosynthesis</keyword>
<keyword id="KW-0067">ATP-binding</keyword>
<keyword id="KW-0963">Cytoplasm</keyword>
<keyword id="KW-0328">Glycosyltransferase</keyword>
<keyword id="KW-0368">Histidine biosynthesis</keyword>
<keyword id="KW-0460">Magnesium</keyword>
<keyword id="KW-0479">Metal-binding</keyword>
<keyword id="KW-0547">Nucleotide-binding</keyword>
<keyword id="KW-1185">Reference proteome</keyword>
<keyword id="KW-0808">Transferase</keyword>
<sequence length="285" mass="30694">MLRIAVPNKGSLSGPAAEMLHEAGYQQRRESKELRIVDPENEVEFFYLRPRDIAIYVSSGRLDIGLTGRDLLIDSGANAEEILPLGFARSTFRFAGKPGTAKGIEDLAGLTVATSYEGIVAKHLADSGIDASVVHLDGAVETAIELGVAEVIADVVETGTSLRNAGLEVFGEPIMKSEAVVIRRVGAGTDEAAESKVQQFLRRLQGVLVARTYVMMDYDCRAEHLEKAVALTPGLESPTISPLHNEGWVAVRAMVPAKEAQRIMDDLYALGARAILTTAIHACRL</sequence>
<dbReference type="EC" id="2.4.2.17" evidence="1"/>
<dbReference type="EMBL" id="BA000030">
    <property type="protein sequence ID" value="BAC74618.1"/>
    <property type="molecule type" value="Genomic_DNA"/>
</dbReference>
<dbReference type="RefSeq" id="WP_010988305.1">
    <property type="nucleotide sequence ID" value="NZ_JZJK01000082.1"/>
</dbReference>
<dbReference type="SMR" id="Q827L7"/>
<dbReference type="GeneID" id="41543981"/>
<dbReference type="KEGG" id="sma:SAVERM_6907"/>
<dbReference type="eggNOG" id="COG0040">
    <property type="taxonomic scope" value="Bacteria"/>
</dbReference>
<dbReference type="HOGENOM" id="CLU_038115_1_1_11"/>
<dbReference type="OrthoDB" id="9801867at2"/>
<dbReference type="UniPathway" id="UPA00031">
    <property type="reaction ID" value="UER00006"/>
</dbReference>
<dbReference type="Proteomes" id="UP000000428">
    <property type="component" value="Chromosome"/>
</dbReference>
<dbReference type="GO" id="GO:0005737">
    <property type="term" value="C:cytoplasm"/>
    <property type="evidence" value="ECO:0007669"/>
    <property type="project" value="UniProtKB-SubCell"/>
</dbReference>
<dbReference type="GO" id="GO:0005524">
    <property type="term" value="F:ATP binding"/>
    <property type="evidence" value="ECO:0007669"/>
    <property type="project" value="UniProtKB-KW"/>
</dbReference>
<dbReference type="GO" id="GO:0003879">
    <property type="term" value="F:ATP phosphoribosyltransferase activity"/>
    <property type="evidence" value="ECO:0007669"/>
    <property type="project" value="UniProtKB-UniRule"/>
</dbReference>
<dbReference type="GO" id="GO:0000287">
    <property type="term" value="F:magnesium ion binding"/>
    <property type="evidence" value="ECO:0007669"/>
    <property type="project" value="UniProtKB-UniRule"/>
</dbReference>
<dbReference type="GO" id="GO:0000105">
    <property type="term" value="P:L-histidine biosynthetic process"/>
    <property type="evidence" value="ECO:0007669"/>
    <property type="project" value="UniProtKB-UniRule"/>
</dbReference>
<dbReference type="CDD" id="cd13591">
    <property type="entry name" value="PBP2_HisGL1"/>
    <property type="match status" value="1"/>
</dbReference>
<dbReference type="FunFam" id="3.30.70.120:FF:000003">
    <property type="entry name" value="ATP phosphoribosyltransferase"/>
    <property type="match status" value="1"/>
</dbReference>
<dbReference type="Gene3D" id="3.30.70.120">
    <property type="match status" value="1"/>
</dbReference>
<dbReference type="Gene3D" id="3.40.190.10">
    <property type="entry name" value="Periplasmic binding protein-like II"/>
    <property type="match status" value="2"/>
</dbReference>
<dbReference type="HAMAP" id="MF_00079">
    <property type="entry name" value="HisG_Long"/>
    <property type="match status" value="1"/>
</dbReference>
<dbReference type="InterPro" id="IPR020621">
    <property type="entry name" value="ATP-PRT_HisG_long"/>
</dbReference>
<dbReference type="InterPro" id="IPR013820">
    <property type="entry name" value="ATP_PRibTrfase_cat"/>
</dbReference>
<dbReference type="InterPro" id="IPR001348">
    <property type="entry name" value="ATP_PRibTrfase_HisG"/>
</dbReference>
<dbReference type="InterPro" id="IPR013115">
    <property type="entry name" value="HisG_C"/>
</dbReference>
<dbReference type="InterPro" id="IPR011322">
    <property type="entry name" value="N-reg_PII-like_a/b"/>
</dbReference>
<dbReference type="InterPro" id="IPR015867">
    <property type="entry name" value="N-reg_PII/ATP_PRibTrfase_C"/>
</dbReference>
<dbReference type="NCBIfam" id="TIGR00070">
    <property type="entry name" value="hisG"/>
    <property type="match status" value="1"/>
</dbReference>
<dbReference type="NCBIfam" id="TIGR03455">
    <property type="entry name" value="HisG_C-term"/>
    <property type="match status" value="1"/>
</dbReference>
<dbReference type="PANTHER" id="PTHR21403:SF8">
    <property type="entry name" value="ATP PHOSPHORIBOSYLTRANSFERASE"/>
    <property type="match status" value="1"/>
</dbReference>
<dbReference type="PANTHER" id="PTHR21403">
    <property type="entry name" value="ATP PHOSPHORIBOSYLTRANSFERASE ATP-PRTASE"/>
    <property type="match status" value="1"/>
</dbReference>
<dbReference type="Pfam" id="PF01634">
    <property type="entry name" value="HisG"/>
    <property type="match status" value="1"/>
</dbReference>
<dbReference type="Pfam" id="PF08029">
    <property type="entry name" value="HisG_C"/>
    <property type="match status" value="1"/>
</dbReference>
<dbReference type="SUPFAM" id="SSF54913">
    <property type="entry name" value="GlnB-like"/>
    <property type="match status" value="1"/>
</dbReference>
<dbReference type="SUPFAM" id="SSF53850">
    <property type="entry name" value="Periplasmic binding protein-like II"/>
    <property type="match status" value="1"/>
</dbReference>
<accession>Q827L7</accession>
<protein>
    <recommendedName>
        <fullName evidence="1">ATP phosphoribosyltransferase</fullName>
        <shortName evidence="1">ATP-PRT</shortName>
        <shortName evidence="1">ATP-PRTase</shortName>
        <ecNumber evidence="1">2.4.2.17</ecNumber>
    </recommendedName>
</protein>
<comment type="function">
    <text evidence="1">Catalyzes the condensation of ATP and 5-phosphoribose 1-diphosphate to form N'-(5'-phosphoribosyl)-ATP (PR-ATP). Has a crucial role in the pathway because the rate of histidine biosynthesis seems to be controlled primarily by regulation of HisG enzymatic activity.</text>
</comment>
<comment type="catalytic activity">
    <reaction evidence="1">
        <text>1-(5-phospho-beta-D-ribosyl)-ATP + diphosphate = 5-phospho-alpha-D-ribose 1-diphosphate + ATP</text>
        <dbReference type="Rhea" id="RHEA:18473"/>
        <dbReference type="ChEBI" id="CHEBI:30616"/>
        <dbReference type="ChEBI" id="CHEBI:33019"/>
        <dbReference type="ChEBI" id="CHEBI:58017"/>
        <dbReference type="ChEBI" id="CHEBI:73183"/>
        <dbReference type="EC" id="2.4.2.17"/>
    </reaction>
</comment>
<comment type="cofactor">
    <cofactor evidence="1">
        <name>Mg(2+)</name>
        <dbReference type="ChEBI" id="CHEBI:18420"/>
    </cofactor>
</comment>
<comment type="activity regulation">
    <text evidence="1">Feedback inhibited by histidine.</text>
</comment>
<comment type="pathway">
    <text evidence="1">Amino-acid biosynthesis; L-histidine biosynthesis; L-histidine from 5-phospho-alpha-D-ribose 1-diphosphate: step 1/9.</text>
</comment>
<comment type="subcellular location">
    <subcellularLocation>
        <location evidence="1">Cytoplasm</location>
    </subcellularLocation>
</comment>
<comment type="similarity">
    <text evidence="1">Belongs to the ATP phosphoribosyltransferase family. Long subfamily.</text>
</comment>
<gene>
    <name evidence="1" type="primary">hisG</name>
    <name type="ordered locus">SAV_6907</name>
</gene>
<proteinExistence type="inferred from homology"/>
<reference key="1">
    <citation type="journal article" date="2001" name="Proc. Natl. Acad. Sci. U.S.A.">
        <title>Genome sequence of an industrial microorganism Streptomyces avermitilis: deducing the ability of producing secondary metabolites.</title>
        <authorList>
            <person name="Omura S."/>
            <person name="Ikeda H."/>
            <person name="Ishikawa J."/>
            <person name="Hanamoto A."/>
            <person name="Takahashi C."/>
            <person name="Shinose M."/>
            <person name="Takahashi Y."/>
            <person name="Horikawa H."/>
            <person name="Nakazawa H."/>
            <person name="Osonoe T."/>
            <person name="Kikuchi H."/>
            <person name="Shiba T."/>
            <person name="Sakaki Y."/>
            <person name="Hattori M."/>
        </authorList>
    </citation>
    <scope>NUCLEOTIDE SEQUENCE [LARGE SCALE GENOMIC DNA]</scope>
    <source>
        <strain>ATCC 31267 / DSM 46492 / JCM 5070 / NBRC 14893 / NCIMB 12804 / NRRL 8165 / MA-4680</strain>
    </source>
</reference>
<reference key="2">
    <citation type="journal article" date="2003" name="Nat. Biotechnol.">
        <title>Complete genome sequence and comparative analysis of the industrial microorganism Streptomyces avermitilis.</title>
        <authorList>
            <person name="Ikeda H."/>
            <person name="Ishikawa J."/>
            <person name="Hanamoto A."/>
            <person name="Shinose M."/>
            <person name="Kikuchi H."/>
            <person name="Shiba T."/>
            <person name="Sakaki Y."/>
            <person name="Hattori M."/>
            <person name="Omura S."/>
        </authorList>
    </citation>
    <scope>NUCLEOTIDE SEQUENCE [LARGE SCALE GENOMIC DNA]</scope>
    <source>
        <strain>ATCC 31267 / DSM 46492 / JCM 5070 / NBRC 14893 / NCIMB 12804 / NRRL 8165 / MA-4680</strain>
    </source>
</reference>
<name>HIS1_STRAW</name>
<evidence type="ECO:0000255" key="1">
    <source>
        <dbReference type="HAMAP-Rule" id="MF_00079"/>
    </source>
</evidence>